<comment type="function">
    <text evidence="1">Component of the chromosomal passenger complex (CPC), a complex that acts as a key regulator of chromosome segregation and cytokinesis.</text>
</comment>
<comment type="subunit">
    <text evidence="1 4">Component of the CPC complex at least composed of IPL1, BIR1 and SLI15 (By similarity). Interacts with CBF2/NDC10 (PubMed:10557299). Interacts with CBF3D/SKP1 (PubMed:10557299).</text>
</comment>
<comment type="interaction">
    <interactant intactId="EBI-3648">
        <id>P47134</id>
    </interactant>
    <interactant intactId="EBI-9319">
        <id>P38991</id>
        <label>IPL1</label>
    </interactant>
    <organismsDiffer>false</organismsDiffer>
    <experiments>4</experiments>
</comment>
<comment type="interaction">
    <interactant intactId="EBI-3648">
        <id>P47134</id>
    </interactant>
    <interactant intactId="EBI-9513736">
        <id>Q3E7Y6</id>
        <label>NBL1</label>
    </interactant>
    <organismsDiffer>false</organismsDiffer>
    <experiments>5</experiments>
</comment>
<comment type="interaction">
    <interactant intactId="EBI-3648">
        <id>P47134</id>
    </interactant>
    <interactant intactId="EBI-20842">
        <id>P38283</id>
        <label>SLI15</label>
    </interactant>
    <organismsDiffer>false</organismsDiffer>
    <experiments>8</experiments>
</comment>
<evidence type="ECO:0000250" key="1">
    <source>
        <dbReference type="UniProtKB" id="O14064"/>
    </source>
</evidence>
<evidence type="ECO:0000255" key="2">
    <source>
        <dbReference type="PROSITE-ProRule" id="PRU00029"/>
    </source>
</evidence>
<evidence type="ECO:0000256" key="3">
    <source>
        <dbReference type="SAM" id="MobiDB-lite"/>
    </source>
</evidence>
<evidence type="ECO:0000269" key="4">
    <source>
    </source>
</evidence>
<evidence type="ECO:0007744" key="5">
    <source>
    </source>
</evidence>
<evidence type="ECO:0007744" key="6">
    <source>
    </source>
</evidence>
<evidence type="ECO:0007744" key="7">
    <source>
    </source>
</evidence>
<evidence type="ECO:0007744" key="8">
    <source>
    </source>
</evidence>
<keyword id="KW-0131">Cell cycle</keyword>
<keyword id="KW-0132">Cell division</keyword>
<keyword id="KW-0479">Metal-binding</keyword>
<keyword id="KW-0597">Phosphoprotein</keyword>
<keyword id="KW-1185">Reference proteome</keyword>
<keyword id="KW-0677">Repeat</keyword>
<keyword id="KW-0862">Zinc</keyword>
<organism>
    <name type="scientific">Saccharomyces cerevisiae (strain ATCC 204508 / S288c)</name>
    <name type="common">Baker's yeast</name>
    <dbReference type="NCBI Taxonomy" id="559292"/>
    <lineage>
        <taxon>Eukaryota</taxon>
        <taxon>Fungi</taxon>
        <taxon>Dikarya</taxon>
        <taxon>Ascomycota</taxon>
        <taxon>Saccharomycotina</taxon>
        <taxon>Saccharomycetes</taxon>
        <taxon>Saccharomycetales</taxon>
        <taxon>Saccharomycetaceae</taxon>
        <taxon>Saccharomyces</taxon>
    </lineage>
</organism>
<proteinExistence type="evidence at protein level"/>
<sequence length="954" mass="108667">MDGQIDKMEKRYSMTKLENRLRTFQDGVALEKKKLKWSFKVIPYQAMAKLGFYFDPVIDPKTSKLKKDSVRCCYCHRQTYNVRDCRSKRKDVLETLSNIMRQHLTVTDNKQVCLLIYLRNKLLTDYSFHMGVSDWKNDKYFSNPDDENVINLRKFTFQDNWPHSGSQNEHPLGIEKMVNAGLMRYDSSIEGLGDPSMDKTLMNDTCYCIYCKQLLQGWSINDDPMSRHYKVSQNGNCYFFQTRNRFERIKNDNDSITKNCEVSPTLGENGKREVINTKTASQRQCPLFESPPSSTGPQLDDYNEKTDISVIQHNISVLDGAQGENVKRNSVEEKEQINMENGSTTLEEGNINRDVLADKKEVISTPTAKEIKRPNVQLTQSSSPIKKKRKFKRISPRKIFDEEDSEHSLNNNSANGDNKDKDLVIDFTSHIIKNRDVGRKNAILDDSTDEFSFSNQGHNTFDIPIPTSSHLLKGIDSDNDNVIREDDTGINTDTKGASSKHEKFSVNSEEDLNFSEVKLTGRDSSTNILIRTQIVDQNLGDIDRDKVPNGGSPEVPKTHELIRDNSEKREAQNGEFRHQKDSTVRQSPDILHSNKSGDNSSNITAIPKEEQRRGNSKTSSIPADIHPKPRKNLQEPRSLSISGKVVPTERKLDNINIDLNFSASDFSPSSQSEQSSKSSSVISTPVASPKINLTRSLHAVKELSGLKKETDDGKYFTNKQETIKILEDVSVKNETPNNEMLLFETGTPIASQENKSRKLFDEEFSGKELDIPIDSSTVEIKKVIKPEFEPVPSVARNLVSGTSSYPRNSRLEEQRKETSTSLADNSKKGSSFNEGNNEKEPNAAEWFKIDENRHLVKNYFHDLLKYINNNDATLANDKDGDLAFLIKQMPAEELDMTFNNWVNLKVQSIKREFIDDCDKKLDILRRDYYTATNFIETLEDDNQLIDIAKKMGIL</sequence>
<gene>
    <name type="primary">BIR1</name>
    <name type="ordered locus">YJR089W</name>
    <name type="ORF">J1880</name>
</gene>
<protein>
    <recommendedName>
        <fullName>Chromosomal passenger complex protein BIR1</fullName>
    </recommendedName>
</protein>
<feature type="chain" id="PRO_0000122388" description="Chromosomal passenger complex protein BIR1">
    <location>
        <begin position="1"/>
        <end position="954"/>
    </location>
</feature>
<feature type="repeat" description="BIR 1">
    <location>
        <begin position="20"/>
        <end position="117"/>
    </location>
</feature>
<feature type="repeat" description="BIR 2">
    <location>
        <begin position="153"/>
        <end position="241"/>
    </location>
</feature>
<feature type="region of interest" description="Disordered" evidence="3">
    <location>
        <begin position="375"/>
        <end position="419"/>
    </location>
</feature>
<feature type="region of interest" description="Disordered" evidence="3">
    <location>
        <begin position="541"/>
        <end position="645"/>
    </location>
</feature>
<feature type="region of interest" description="Disordered" evidence="3">
    <location>
        <begin position="661"/>
        <end position="685"/>
    </location>
</feature>
<feature type="region of interest" description="Disordered" evidence="3">
    <location>
        <begin position="798"/>
        <end position="839"/>
    </location>
</feature>
<feature type="compositionally biased region" description="Basic residues" evidence="3">
    <location>
        <begin position="385"/>
        <end position="396"/>
    </location>
</feature>
<feature type="compositionally biased region" description="Basic and acidic residues" evidence="3">
    <location>
        <begin position="556"/>
        <end position="583"/>
    </location>
</feature>
<feature type="compositionally biased region" description="Polar residues" evidence="3">
    <location>
        <begin position="593"/>
        <end position="604"/>
    </location>
</feature>
<feature type="compositionally biased region" description="Basic and acidic residues" evidence="3">
    <location>
        <begin position="809"/>
        <end position="818"/>
    </location>
</feature>
<feature type="compositionally biased region" description="Polar residues" evidence="3">
    <location>
        <begin position="819"/>
        <end position="835"/>
    </location>
</feature>
<feature type="binding site" evidence="2">
    <location>
        <position position="208"/>
    </location>
    <ligand>
        <name>Zn(2+)</name>
        <dbReference type="ChEBI" id="CHEBI:29105"/>
    </ligand>
</feature>
<feature type="binding site" evidence="2">
    <location>
        <position position="211"/>
    </location>
    <ligand>
        <name>Zn(2+)</name>
        <dbReference type="ChEBI" id="CHEBI:29105"/>
    </ligand>
</feature>
<feature type="binding site" evidence="2">
    <location>
        <position position="228"/>
    </location>
    <ligand>
        <name>Zn(2+)</name>
        <dbReference type="ChEBI" id="CHEBI:29105"/>
    </ligand>
</feature>
<feature type="binding site" evidence="2">
    <location>
        <position position="237"/>
    </location>
    <ligand>
        <name>Zn(2+)</name>
        <dbReference type="ChEBI" id="CHEBI:29105"/>
    </ligand>
</feature>
<feature type="modified residue" description="Phosphoserine" evidence="8">
    <location>
        <position position="477"/>
    </location>
</feature>
<feature type="modified residue" description="Phosphoserine" evidence="5">
    <location>
        <position position="508"/>
    </location>
</feature>
<feature type="modified residue" description="Phosphoserine" evidence="7">
    <location>
        <position position="552"/>
    </location>
</feature>
<feature type="modified residue" description="Phosphoserine" evidence="6">
    <location>
        <position position="587"/>
    </location>
</feature>
<feature type="modified residue" description="Phosphoserine" evidence="7">
    <location>
        <position position="751"/>
    </location>
</feature>
<feature type="modified residue" description="Phosphoserine" evidence="8">
    <location>
        <position position="765"/>
    </location>
</feature>
<dbReference type="EMBL" id="Z49589">
    <property type="protein sequence ID" value="CAA89616.1"/>
    <property type="molecule type" value="Genomic_DNA"/>
</dbReference>
<dbReference type="EMBL" id="L47993">
    <property type="protein sequence ID" value="AAB39312.1"/>
    <property type="molecule type" value="Genomic_DNA"/>
</dbReference>
<dbReference type="EMBL" id="BK006943">
    <property type="protein sequence ID" value="DAA08873.1"/>
    <property type="molecule type" value="Genomic_DNA"/>
</dbReference>
<dbReference type="PIR" id="S57108">
    <property type="entry name" value="S57108"/>
</dbReference>
<dbReference type="RefSeq" id="NP_012622.3">
    <property type="nucleotide sequence ID" value="NM_001181746.3"/>
</dbReference>
<dbReference type="BioGRID" id="33843">
    <property type="interactions" value="989"/>
</dbReference>
<dbReference type="ComplexPortal" id="CPX-1900">
    <property type="entry name" value="Chromosomal passenger complex"/>
</dbReference>
<dbReference type="DIP" id="DIP-5259N"/>
<dbReference type="FunCoup" id="P47134">
    <property type="interactions" value="99"/>
</dbReference>
<dbReference type="IntAct" id="P47134">
    <property type="interactions" value="10"/>
</dbReference>
<dbReference type="MINT" id="P47134"/>
<dbReference type="STRING" id="4932.YJR089W"/>
<dbReference type="CarbonylDB" id="P47134"/>
<dbReference type="iPTMnet" id="P47134"/>
<dbReference type="PaxDb" id="4932-YJR089W"/>
<dbReference type="PeptideAtlas" id="P47134"/>
<dbReference type="EnsemblFungi" id="YJR089W_mRNA">
    <property type="protein sequence ID" value="YJR089W"/>
    <property type="gene ID" value="YJR089W"/>
</dbReference>
<dbReference type="GeneID" id="853551"/>
<dbReference type="KEGG" id="sce:YJR089W"/>
<dbReference type="AGR" id="SGD:S000003849"/>
<dbReference type="SGD" id="S000003849">
    <property type="gene designation" value="BIR1"/>
</dbReference>
<dbReference type="VEuPathDB" id="FungiDB:YJR089W"/>
<dbReference type="eggNOG" id="KOG1101">
    <property type="taxonomic scope" value="Eukaryota"/>
</dbReference>
<dbReference type="HOGENOM" id="CLU_341677_0_0_1"/>
<dbReference type="InParanoid" id="P47134"/>
<dbReference type="OMA" id="QINMENG"/>
<dbReference type="OrthoDB" id="4070233at2759"/>
<dbReference type="BioCyc" id="YEAST:G3O-31716-MONOMER"/>
<dbReference type="BioGRID-ORCS" id="853551">
    <property type="hits" value="7 hits in 10 CRISPR screens"/>
</dbReference>
<dbReference type="PRO" id="PR:P47134"/>
<dbReference type="Proteomes" id="UP000002311">
    <property type="component" value="Chromosome X"/>
</dbReference>
<dbReference type="RNAct" id="P47134">
    <property type="molecule type" value="protein"/>
</dbReference>
<dbReference type="GO" id="GO:0032133">
    <property type="term" value="C:chromosome passenger complex"/>
    <property type="evidence" value="ECO:0000314"/>
    <property type="project" value="SGD"/>
</dbReference>
<dbReference type="GO" id="GO:0005737">
    <property type="term" value="C:cytoplasm"/>
    <property type="evidence" value="ECO:0000314"/>
    <property type="project" value="SGD"/>
</dbReference>
<dbReference type="GO" id="GO:0000776">
    <property type="term" value="C:kinetochore"/>
    <property type="evidence" value="ECO:0000316"/>
    <property type="project" value="SGD"/>
</dbReference>
<dbReference type="GO" id="GO:0005874">
    <property type="term" value="C:microtubule"/>
    <property type="evidence" value="ECO:0007005"/>
    <property type="project" value="SGD"/>
</dbReference>
<dbReference type="GO" id="GO:0005739">
    <property type="term" value="C:mitochondrion"/>
    <property type="evidence" value="ECO:0007005"/>
    <property type="project" value="SGD"/>
</dbReference>
<dbReference type="GO" id="GO:0005634">
    <property type="term" value="C:nucleus"/>
    <property type="evidence" value="ECO:0000314"/>
    <property type="project" value="SGD"/>
</dbReference>
<dbReference type="GO" id="GO:0005819">
    <property type="term" value="C:spindle"/>
    <property type="evidence" value="ECO:0000314"/>
    <property type="project" value="SGD"/>
</dbReference>
<dbReference type="GO" id="GO:0051233">
    <property type="term" value="C:spindle midzone"/>
    <property type="evidence" value="ECO:0000314"/>
    <property type="project" value="SGD"/>
</dbReference>
<dbReference type="GO" id="GO:0046872">
    <property type="term" value="F:metal ion binding"/>
    <property type="evidence" value="ECO:0007669"/>
    <property type="project" value="UniProtKB-KW"/>
</dbReference>
<dbReference type="GO" id="GO:0006915">
    <property type="term" value="P:apoptotic process"/>
    <property type="evidence" value="ECO:0000315"/>
    <property type="project" value="SGD"/>
</dbReference>
<dbReference type="GO" id="GO:0051316">
    <property type="term" value="P:attachment of meiotic spindle microtubules to kinetochore"/>
    <property type="evidence" value="ECO:0000303"/>
    <property type="project" value="ComplexPortal"/>
</dbReference>
<dbReference type="GO" id="GO:0007059">
    <property type="term" value="P:chromosome segregation"/>
    <property type="evidence" value="ECO:0000315"/>
    <property type="project" value="SGD"/>
</dbReference>
<dbReference type="GO" id="GO:0000281">
    <property type="term" value="P:mitotic cytokinesis"/>
    <property type="evidence" value="ECO:0000318"/>
    <property type="project" value="GO_Central"/>
</dbReference>
<dbReference type="GO" id="GO:0007094">
    <property type="term" value="P:mitotic spindle assembly checkpoint signaling"/>
    <property type="evidence" value="ECO:0000315"/>
    <property type="project" value="SGD"/>
</dbReference>
<dbReference type="GO" id="GO:0000022">
    <property type="term" value="P:mitotic spindle elongation"/>
    <property type="evidence" value="ECO:0000315"/>
    <property type="project" value="SGD"/>
</dbReference>
<dbReference type="GO" id="GO:0007052">
    <property type="term" value="P:mitotic spindle organization"/>
    <property type="evidence" value="ECO:0000318"/>
    <property type="project" value="GO_Central"/>
</dbReference>
<dbReference type="GO" id="GO:0043066">
    <property type="term" value="P:negative regulation of apoptotic process"/>
    <property type="evidence" value="ECO:0000318"/>
    <property type="project" value="GO_Central"/>
</dbReference>
<dbReference type="GO" id="GO:0090267">
    <property type="term" value="P:positive regulation of mitotic cell cycle spindle assembly checkpoint"/>
    <property type="evidence" value="ECO:0000303"/>
    <property type="project" value="ComplexPortal"/>
</dbReference>
<dbReference type="GO" id="GO:0031134">
    <property type="term" value="P:sister chromatid biorientation"/>
    <property type="evidence" value="ECO:0000315"/>
    <property type="project" value="SGD"/>
</dbReference>
<dbReference type="CDD" id="cd00022">
    <property type="entry name" value="BIR"/>
    <property type="match status" value="1"/>
</dbReference>
<dbReference type="Gene3D" id="1.10.1170.10">
    <property type="entry name" value="Inhibitor Of Apoptosis Protein (2mihbC-IAP-1), Chain A"/>
    <property type="match status" value="2"/>
</dbReference>
<dbReference type="InterPro" id="IPR051190">
    <property type="entry name" value="Baculoviral_IAP"/>
</dbReference>
<dbReference type="InterPro" id="IPR001370">
    <property type="entry name" value="BIR_rpt"/>
</dbReference>
<dbReference type="PANTHER" id="PTHR46771">
    <property type="entry name" value="DETERIN"/>
    <property type="match status" value="1"/>
</dbReference>
<dbReference type="PANTHER" id="PTHR46771:SF5">
    <property type="entry name" value="DETERIN"/>
    <property type="match status" value="1"/>
</dbReference>
<dbReference type="Pfam" id="PF00653">
    <property type="entry name" value="BIR"/>
    <property type="match status" value="1"/>
</dbReference>
<dbReference type="SMART" id="SM00238">
    <property type="entry name" value="BIR"/>
    <property type="match status" value="1"/>
</dbReference>
<dbReference type="SUPFAM" id="SSF57924">
    <property type="entry name" value="Inhibitor of apoptosis (IAP) repeat"/>
    <property type="match status" value="2"/>
</dbReference>
<dbReference type="PROSITE" id="PS50143">
    <property type="entry name" value="BIR_REPEAT_2"/>
    <property type="match status" value="2"/>
</dbReference>
<name>BIR1_YEAST</name>
<reference key="1">
    <citation type="journal article" date="1996" name="Yeast">
        <title>Analysis of a 62 kb DNA sequence of chromosome X reveals 36 open reading frames and a gene cluster with a counterpart on chromosome XI.</title>
        <authorList>
            <person name="Huang M.-E."/>
            <person name="Manus V."/>
            <person name="Chuat J.-C."/>
            <person name="Galibert F."/>
        </authorList>
    </citation>
    <scope>NUCLEOTIDE SEQUENCE [GENOMIC DNA]</scope>
    <source>
        <strain>ATCC 204508 / S288c</strain>
    </source>
</reference>
<reference key="2">
    <citation type="journal article" date="1996" name="EMBO J.">
        <title>Complete nucleotide sequence of Saccharomyces cerevisiae chromosome X.</title>
        <authorList>
            <person name="Galibert F."/>
            <person name="Alexandraki D."/>
            <person name="Baur A."/>
            <person name="Boles E."/>
            <person name="Chalwatzis N."/>
            <person name="Chuat J.-C."/>
            <person name="Coster F."/>
            <person name="Cziepluch C."/>
            <person name="de Haan M."/>
            <person name="Domdey H."/>
            <person name="Durand P."/>
            <person name="Entian K.-D."/>
            <person name="Gatius M."/>
            <person name="Goffeau A."/>
            <person name="Grivell L.A."/>
            <person name="Hennemann A."/>
            <person name="Herbert C.J."/>
            <person name="Heumann K."/>
            <person name="Hilger F."/>
            <person name="Hollenberg C.P."/>
            <person name="Huang M.-E."/>
            <person name="Jacq C."/>
            <person name="Jauniaux J.-C."/>
            <person name="Katsoulou C."/>
            <person name="Kirchrath L."/>
            <person name="Kleine K."/>
            <person name="Kordes E."/>
            <person name="Koetter P."/>
            <person name="Liebl S."/>
            <person name="Louis E.J."/>
            <person name="Manus V."/>
            <person name="Mewes H.-W."/>
            <person name="Miosga T."/>
            <person name="Obermaier B."/>
            <person name="Perea J."/>
            <person name="Pohl T.M."/>
            <person name="Portetelle D."/>
            <person name="Pujol A."/>
            <person name="Purnelle B."/>
            <person name="Ramezani Rad M."/>
            <person name="Rasmussen S.W."/>
            <person name="Rose M."/>
            <person name="Rossau R."/>
            <person name="Schaaff-Gerstenschlaeger I."/>
            <person name="Smits P.H.M."/>
            <person name="Scarcez T."/>
            <person name="Soriano N."/>
            <person name="To Van D."/>
            <person name="Tzermia M."/>
            <person name="Van Broekhoven A."/>
            <person name="Vandenbol M."/>
            <person name="Wedler H."/>
            <person name="von Wettstein D."/>
            <person name="Wambutt R."/>
            <person name="Zagulski M."/>
            <person name="Zollner A."/>
            <person name="Karpfinger-Hartl L."/>
        </authorList>
    </citation>
    <scope>NUCLEOTIDE SEQUENCE [LARGE SCALE GENOMIC DNA]</scope>
    <source>
        <strain>ATCC 204508 / S288c</strain>
    </source>
</reference>
<reference key="3">
    <citation type="journal article" date="2014" name="G3 (Bethesda)">
        <title>The reference genome sequence of Saccharomyces cerevisiae: Then and now.</title>
        <authorList>
            <person name="Engel S.R."/>
            <person name="Dietrich F.S."/>
            <person name="Fisk D.G."/>
            <person name="Binkley G."/>
            <person name="Balakrishnan R."/>
            <person name="Costanzo M.C."/>
            <person name="Dwight S.S."/>
            <person name="Hitz B.C."/>
            <person name="Karra K."/>
            <person name="Nash R.S."/>
            <person name="Weng S."/>
            <person name="Wong E.D."/>
            <person name="Lloyd P."/>
            <person name="Skrzypek M.S."/>
            <person name="Miyasato S.R."/>
            <person name="Simison M."/>
            <person name="Cherry J.M."/>
        </authorList>
    </citation>
    <scope>GENOME REANNOTATION</scope>
    <source>
        <strain>ATCC 204508 / S288c</strain>
    </source>
</reference>
<reference key="4">
    <citation type="journal article" date="1999" name="Proc. Natl. Acad. Sci. U.S.A.">
        <title>Role for yeast inhibitor of apoptosis (IAP)-like proteins in cell division.</title>
        <authorList>
            <person name="Uren A.G."/>
            <person name="Beilharz T."/>
            <person name="O'Connell M.J."/>
            <person name="Bugg S.J."/>
            <person name="van Driel R."/>
            <person name="Vaux D.L."/>
            <person name="Lithgow T."/>
        </authorList>
    </citation>
    <scope>CHARACTERIZATION</scope>
</reference>
<reference key="5">
    <citation type="journal article" date="1999" name="Proc. Natl. Acad. Sci. U.S.A.">
        <title>Participation of Bir1p, a member of the inhibitor of apoptosis family, in yeast chromosome segregation events.</title>
        <authorList>
            <person name="Yoon H.J."/>
            <person name="Carbon J."/>
        </authorList>
    </citation>
    <scope>CHARACTERIZATION</scope>
    <scope>INTERACTION WITH NDC10 AND SKP1</scope>
</reference>
<reference key="6">
    <citation type="journal article" date="2000" name="J. Biol. Chem.">
        <title>Cell division regulation by BIR1, a member of the inhibitor of apoptosis family in yeast.</title>
        <authorList>
            <person name="Li F."/>
            <person name="Flanary P.L."/>
            <person name="Altieri D.C."/>
            <person name="Dohlman H.G."/>
        </authorList>
    </citation>
    <scope>CHARACTERIZATION</scope>
</reference>
<reference key="7">
    <citation type="journal article" date="2005" name="Mol. Cell. Proteomics">
        <title>Quantitative phosphoproteomics applied to the yeast pheromone signaling pathway.</title>
        <authorList>
            <person name="Gruhler A."/>
            <person name="Olsen J.V."/>
            <person name="Mohammed S."/>
            <person name="Mortensen P."/>
            <person name="Faergeman N.J."/>
            <person name="Mann M."/>
            <person name="Jensen O.N."/>
        </authorList>
    </citation>
    <scope>PHOSPHORYLATION [LARGE SCALE ANALYSIS] AT SER-508</scope>
    <scope>IDENTIFICATION BY MASS SPECTROMETRY [LARGE SCALE ANALYSIS]</scope>
    <source>
        <strain>YAL6B</strain>
    </source>
</reference>
<reference key="8">
    <citation type="journal article" date="2007" name="Proc. Natl. Acad. Sci. U.S.A.">
        <title>Analysis of phosphorylation sites on proteins from Saccharomyces cerevisiae by electron transfer dissociation (ETD) mass spectrometry.</title>
        <authorList>
            <person name="Chi A."/>
            <person name="Huttenhower C."/>
            <person name="Geer L.Y."/>
            <person name="Coon J.J."/>
            <person name="Syka J.E.P."/>
            <person name="Bai D.L."/>
            <person name="Shabanowitz J."/>
            <person name="Burke D.J."/>
            <person name="Troyanskaya O.G."/>
            <person name="Hunt D.F."/>
        </authorList>
    </citation>
    <scope>PHOSPHORYLATION [LARGE SCALE ANALYSIS] AT SER-587</scope>
    <scope>IDENTIFICATION BY MASS SPECTROMETRY [LARGE SCALE ANALYSIS]</scope>
</reference>
<reference key="9">
    <citation type="journal article" date="2008" name="Mol. Cell. Proteomics">
        <title>A multidimensional chromatography technology for in-depth phosphoproteome analysis.</title>
        <authorList>
            <person name="Albuquerque C.P."/>
            <person name="Smolka M.B."/>
            <person name="Payne S.H."/>
            <person name="Bafna V."/>
            <person name="Eng J."/>
            <person name="Zhou H."/>
        </authorList>
    </citation>
    <scope>PHOSPHORYLATION [LARGE SCALE ANALYSIS] AT SER-552 AND SER-751</scope>
    <scope>IDENTIFICATION BY MASS SPECTROMETRY [LARGE SCALE ANALYSIS]</scope>
</reference>
<reference key="10">
    <citation type="journal article" date="2009" name="Science">
        <title>Global analysis of Cdk1 substrate phosphorylation sites provides insights into evolution.</title>
        <authorList>
            <person name="Holt L.J."/>
            <person name="Tuch B.B."/>
            <person name="Villen J."/>
            <person name="Johnson A.D."/>
            <person name="Gygi S.P."/>
            <person name="Morgan D.O."/>
        </authorList>
    </citation>
    <scope>PHOSPHORYLATION [LARGE SCALE ANALYSIS] AT SER-477 AND SER-765</scope>
    <scope>IDENTIFICATION BY MASS SPECTROMETRY [LARGE SCALE ANALYSIS]</scope>
</reference>
<accession>P47134</accession>
<accession>D6VWQ7</accession>